<keyword id="KW-0028">Amino-acid biosynthesis</keyword>
<keyword id="KW-0963">Cytoplasm</keyword>
<keyword id="KW-0521">NADP</keyword>
<keyword id="KW-0560">Oxidoreductase</keyword>
<keyword id="KW-0641">Proline biosynthesis</keyword>
<keyword id="KW-1185">Reference proteome</keyword>
<accession>A6TUA0</accession>
<sequence>MMTNLMEQCKVLQNASKQLSSMNTKDKNEALRQVAISLQKNESFIIQENQKDVENAEAKGMKESLVDRLRLTKDRVEGMIKGIQTIIELKDPVWKSNEVWTLENGLTVSKMTVPIGVIGIIYESRPNVTVDAFCLTLKSGNGVLLRGSSTSIFSNRALVHAIKEGLKNSDVSEAVISLIDDPDRGLVKEMLTLNEYIDLIIPRGGKELIDFVVKNATVPTIETGVGNCHIFVDESANIDEAVDIIENAKVQRPGVCNACETVLIHEKIAKDLLPKVSGRIGKQVEIRGCQHTQSLIGGKLAIEDDWAEEFLDYIVAVKVVPNVDEAIEHINHFGTKHSEAILTENLSHANQFLRQVDAAAVYVNASTRFTDGSEFGFGGEMGISTQKIHARGPMGLNELVTVKYTIVGNGQIRK</sequence>
<proteinExistence type="inferred from homology"/>
<reference key="1">
    <citation type="journal article" date="2016" name="Genome Announc.">
        <title>Complete genome sequence of Alkaliphilus metalliredigens strain QYMF, an alkaliphilic and metal-reducing bacterium isolated from borax-contaminated leachate ponds.</title>
        <authorList>
            <person name="Hwang C."/>
            <person name="Copeland A."/>
            <person name="Lucas S."/>
            <person name="Lapidus A."/>
            <person name="Barry K."/>
            <person name="Detter J.C."/>
            <person name="Glavina Del Rio T."/>
            <person name="Hammon N."/>
            <person name="Israni S."/>
            <person name="Dalin E."/>
            <person name="Tice H."/>
            <person name="Pitluck S."/>
            <person name="Chertkov O."/>
            <person name="Brettin T."/>
            <person name="Bruce D."/>
            <person name="Han C."/>
            <person name="Schmutz J."/>
            <person name="Larimer F."/>
            <person name="Land M.L."/>
            <person name="Hauser L."/>
            <person name="Kyrpides N."/>
            <person name="Mikhailova N."/>
            <person name="Ye Q."/>
            <person name="Zhou J."/>
            <person name="Richardson P."/>
            <person name="Fields M.W."/>
        </authorList>
    </citation>
    <scope>NUCLEOTIDE SEQUENCE [LARGE SCALE GENOMIC DNA]</scope>
    <source>
        <strain>QYMF</strain>
    </source>
</reference>
<protein>
    <recommendedName>
        <fullName evidence="1">Gamma-glutamyl phosphate reductase</fullName>
        <shortName evidence="1">GPR</shortName>
        <ecNumber evidence="1">1.2.1.41</ecNumber>
    </recommendedName>
    <alternativeName>
        <fullName evidence="1">Glutamate-5-semialdehyde dehydrogenase</fullName>
    </alternativeName>
    <alternativeName>
        <fullName evidence="1">Glutamyl-gamma-semialdehyde dehydrogenase</fullName>
        <shortName evidence="1">GSA dehydrogenase</shortName>
    </alternativeName>
</protein>
<feature type="chain" id="PRO_1000080475" description="Gamma-glutamyl phosphate reductase">
    <location>
        <begin position="1"/>
        <end position="414"/>
    </location>
</feature>
<evidence type="ECO:0000255" key="1">
    <source>
        <dbReference type="HAMAP-Rule" id="MF_00412"/>
    </source>
</evidence>
<name>PROA_ALKMQ</name>
<comment type="function">
    <text evidence="1">Catalyzes the NADPH-dependent reduction of L-glutamate 5-phosphate into L-glutamate 5-semialdehyde and phosphate. The product spontaneously undergoes cyclization to form 1-pyrroline-5-carboxylate.</text>
</comment>
<comment type="catalytic activity">
    <reaction evidence="1">
        <text>L-glutamate 5-semialdehyde + phosphate + NADP(+) = L-glutamyl 5-phosphate + NADPH + H(+)</text>
        <dbReference type="Rhea" id="RHEA:19541"/>
        <dbReference type="ChEBI" id="CHEBI:15378"/>
        <dbReference type="ChEBI" id="CHEBI:43474"/>
        <dbReference type="ChEBI" id="CHEBI:57783"/>
        <dbReference type="ChEBI" id="CHEBI:58066"/>
        <dbReference type="ChEBI" id="CHEBI:58274"/>
        <dbReference type="ChEBI" id="CHEBI:58349"/>
        <dbReference type="EC" id="1.2.1.41"/>
    </reaction>
</comment>
<comment type="pathway">
    <text evidence="1">Amino-acid biosynthesis; L-proline biosynthesis; L-glutamate 5-semialdehyde from L-glutamate: step 2/2.</text>
</comment>
<comment type="subcellular location">
    <subcellularLocation>
        <location evidence="1">Cytoplasm</location>
    </subcellularLocation>
</comment>
<comment type="similarity">
    <text evidence="1">Belongs to the gamma-glutamyl phosphate reductase family.</text>
</comment>
<dbReference type="EC" id="1.2.1.41" evidence="1"/>
<dbReference type="EMBL" id="CP000724">
    <property type="protein sequence ID" value="ABR49768.1"/>
    <property type="molecule type" value="Genomic_DNA"/>
</dbReference>
<dbReference type="RefSeq" id="WP_012064728.1">
    <property type="nucleotide sequence ID" value="NC_009633.1"/>
</dbReference>
<dbReference type="SMR" id="A6TUA0"/>
<dbReference type="STRING" id="293826.Amet_3646"/>
<dbReference type="KEGG" id="amt:Amet_3646"/>
<dbReference type="eggNOG" id="COG0014">
    <property type="taxonomic scope" value="Bacteria"/>
</dbReference>
<dbReference type="HOGENOM" id="CLU_030231_0_0_9"/>
<dbReference type="UniPathway" id="UPA00098">
    <property type="reaction ID" value="UER00360"/>
</dbReference>
<dbReference type="Proteomes" id="UP000001572">
    <property type="component" value="Chromosome"/>
</dbReference>
<dbReference type="GO" id="GO:0005737">
    <property type="term" value="C:cytoplasm"/>
    <property type="evidence" value="ECO:0007669"/>
    <property type="project" value="UniProtKB-SubCell"/>
</dbReference>
<dbReference type="GO" id="GO:0004350">
    <property type="term" value="F:glutamate-5-semialdehyde dehydrogenase activity"/>
    <property type="evidence" value="ECO:0007669"/>
    <property type="project" value="UniProtKB-UniRule"/>
</dbReference>
<dbReference type="GO" id="GO:0050661">
    <property type="term" value="F:NADP binding"/>
    <property type="evidence" value="ECO:0007669"/>
    <property type="project" value="InterPro"/>
</dbReference>
<dbReference type="GO" id="GO:0055129">
    <property type="term" value="P:L-proline biosynthetic process"/>
    <property type="evidence" value="ECO:0007669"/>
    <property type="project" value="UniProtKB-UniRule"/>
</dbReference>
<dbReference type="CDD" id="cd07079">
    <property type="entry name" value="ALDH_F18-19_ProA-GPR"/>
    <property type="match status" value="1"/>
</dbReference>
<dbReference type="FunFam" id="3.40.309.10:FF:000006">
    <property type="entry name" value="Gamma-glutamyl phosphate reductase"/>
    <property type="match status" value="1"/>
</dbReference>
<dbReference type="Gene3D" id="3.40.605.10">
    <property type="entry name" value="Aldehyde Dehydrogenase, Chain A, domain 1"/>
    <property type="match status" value="1"/>
</dbReference>
<dbReference type="Gene3D" id="3.40.309.10">
    <property type="entry name" value="Aldehyde Dehydrogenase, Chain A, domain 2"/>
    <property type="match status" value="1"/>
</dbReference>
<dbReference type="HAMAP" id="MF_00412">
    <property type="entry name" value="ProA"/>
    <property type="match status" value="1"/>
</dbReference>
<dbReference type="InterPro" id="IPR016161">
    <property type="entry name" value="Ald_DH/histidinol_DH"/>
</dbReference>
<dbReference type="InterPro" id="IPR016163">
    <property type="entry name" value="Ald_DH_C"/>
</dbReference>
<dbReference type="InterPro" id="IPR016162">
    <property type="entry name" value="Ald_DH_N"/>
</dbReference>
<dbReference type="InterPro" id="IPR015590">
    <property type="entry name" value="Aldehyde_DH_dom"/>
</dbReference>
<dbReference type="InterPro" id="IPR020593">
    <property type="entry name" value="G-glutamylP_reductase_CS"/>
</dbReference>
<dbReference type="InterPro" id="IPR012134">
    <property type="entry name" value="Glu-5-SA_DH"/>
</dbReference>
<dbReference type="InterPro" id="IPR000965">
    <property type="entry name" value="GPR_dom"/>
</dbReference>
<dbReference type="NCBIfam" id="NF001221">
    <property type="entry name" value="PRK00197.1"/>
    <property type="match status" value="1"/>
</dbReference>
<dbReference type="NCBIfam" id="TIGR00407">
    <property type="entry name" value="proA"/>
    <property type="match status" value="1"/>
</dbReference>
<dbReference type="PANTHER" id="PTHR11063:SF8">
    <property type="entry name" value="DELTA-1-PYRROLINE-5-CARBOXYLATE SYNTHASE"/>
    <property type="match status" value="1"/>
</dbReference>
<dbReference type="PANTHER" id="PTHR11063">
    <property type="entry name" value="GLUTAMATE SEMIALDEHYDE DEHYDROGENASE"/>
    <property type="match status" value="1"/>
</dbReference>
<dbReference type="Pfam" id="PF00171">
    <property type="entry name" value="Aldedh"/>
    <property type="match status" value="2"/>
</dbReference>
<dbReference type="PIRSF" id="PIRSF000151">
    <property type="entry name" value="GPR"/>
    <property type="match status" value="1"/>
</dbReference>
<dbReference type="SUPFAM" id="SSF53720">
    <property type="entry name" value="ALDH-like"/>
    <property type="match status" value="1"/>
</dbReference>
<dbReference type="PROSITE" id="PS01223">
    <property type="entry name" value="PROA"/>
    <property type="match status" value="1"/>
</dbReference>
<organism>
    <name type="scientific">Alkaliphilus metalliredigens (strain QYMF)</name>
    <dbReference type="NCBI Taxonomy" id="293826"/>
    <lineage>
        <taxon>Bacteria</taxon>
        <taxon>Bacillati</taxon>
        <taxon>Bacillota</taxon>
        <taxon>Clostridia</taxon>
        <taxon>Peptostreptococcales</taxon>
        <taxon>Natronincolaceae</taxon>
        <taxon>Alkaliphilus</taxon>
    </lineage>
</organism>
<gene>
    <name evidence="1" type="primary">proA</name>
    <name type="ordered locus">Amet_3646</name>
</gene>